<name>CCMA_SHESM</name>
<protein>
    <recommendedName>
        <fullName evidence="1">Cytochrome c biogenesis ATP-binding export protein CcmA</fullName>
        <ecNumber evidence="1">7.6.2.5</ecNumber>
    </recommendedName>
    <alternativeName>
        <fullName evidence="1">Heme exporter protein A</fullName>
    </alternativeName>
</protein>
<comment type="function">
    <text evidence="1">Part of the ABC transporter complex CcmAB involved in the biogenesis of c-type cytochromes; once thought to export heme, this seems not to be the case, but its exact role is uncertain. Responsible for energy coupling to the transport system.</text>
</comment>
<comment type="catalytic activity">
    <reaction evidence="1">
        <text>heme b(in) + ATP + H2O = heme b(out) + ADP + phosphate + H(+)</text>
        <dbReference type="Rhea" id="RHEA:19261"/>
        <dbReference type="ChEBI" id="CHEBI:15377"/>
        <dbReference type="ChEBI" id="CHEBI:15378"/>
        <dbReference type="ChEBI" id="CHEBI:30616"/>
        <dbReference type="ChEBI" id="CHEBI:43474"/>
        <dbReference type="ChEBI" id="CHEBI:60344"/>
        <dbReference type="ChEBI" id="CHEBI:456216"/>
        <dbReference type="EC" id="7.6.2.5"/>
    </reaction>
</comment>
<comment type="subunit">
    <text evidence="1">The complex is composed of two ATP-binding proteins (CcmA) and two transmembrane proteins (CcmB).</text>
</comment>
<comment type="subcellular location">
    <subcellularLocation>
        <location evidence="1">Cell inner membrane</location>
        <topology evidence="1">Peripheral membrane protein</topology>
    </subcellularLocation>
</comment>
<comment type="similarity">
    <text evidence="1">Belongs to the ABC transporter superfamily. CcmA exporter (TC 3.A.1.107) family.</text>
</comment>
<evidence type="ECO:0000255" key="1">
    <source>
        <dbReference type="HAMAP-Rule" id="MF_01707"/>
    </source>
</evidence>
<proteinExistence type="inferred from homology"/>
<feature type="chain" id="PRO_0000271957" description="Cytochrome c biogenesis ATP-binding export protein CcmA">
    <location>
        <begin position="1"/>
        <end position="216"/>
    </location>
</feature>
<feature type="domain" description="ABC transporter" evidence="1">
    <location>
        <begin position="11"/>
        <end position="216"/>
    </location>
</feature>
<feature type="binding site" evidence="1">
    <location>
        <begin position="43"/>
        <end position="50"/>
    </location>
    <ligand>
        <name>ATP</name>
        <dbReference type="ChEBI" id="CHEBI:30616"/>
    </ligand>
</feature>
<accession>Q0HNQ5</accession>
<reference key="1">
    <citation type="submission" date="2006-08" db="EMBL/GenBank/DDBJ databases">
        <title>Complete sequence of Shewanella sp. MR-4.</title>
        <authorList>
            <consortium name="US DOE Joint Genome Institute"/>
            <person name="Copeland A."/>
            <person name="Lucas S."/>
            <person name="Lapidus A."/>
            <person name="Barry K."/>
            <person name="Detter J.C."/>
            <person name="Glavina del Rio T."/>
            <person name="Hammon N."/>
            <person name="Israni S."/>
            <person name="Dalin E."/>
            <person name="Tice H."/>
            <person name="Pitluck S."/>
            <person name="Kiss H."/>
            <person name="Brettin T."/>
            <person name="Bruce D."/>
            <person name="Han C."/>
            <person name="Tapia R."/>
            <person name="Gilna P."/>
            <person name="Schmutz J."/>
            <person name="Larimer F."/>
            <person name="Land M."/>
            <person name="Hauser L."/>
            <person name="Kyrpides N."/>
            <person name="Mikhailova N."/>
            <person name="Nealson K."/>
            <person name="Konstantinidis K."/>
            <person name="Klappenbach J."/>
            <person name="Tiedje J."/>
            <person name="Richardson P."/>
        </authorList>
    </citation>
    <scope>NUCLEOTIDE SEQUENCE [LARGE SCALE GENOMIC DNA]</scope>
    <source>
        <strain>MR-4</strain>
    </source>
</reference>
<organism>
    <name type="scientific">Shewanella sp. (strain MR-4)</name>
    <dbReference type="NCBI Taxonomy" id="60480"/>
    <lineage>
        <taxon>Bacteria</taxon>
        <taxon>Pseudomonadati</taxon>
        <taxon>Pseudomonadota</taxon>
        <taxon>Gammaproteobacteria</taxon>
        <taxon>Alteromonadales</taxon>
        <taxon>Shewanellaceae</taxon>
        <taxon>Shewanella</taxon>
    </lineage>
</organism>
<gene>
    <name evidence="1" type="primary">ccmA</name>
    <name type="ordered locus">Shewmr4_0231</name>
</gene>
<sequence length="216" mass="24286">MTNITSVNTLVSASKLTCIREERILFDELSFDINAGDIIQIEGPNGAGKTSLLRILAGLSRPYAGQTFYLNEDINRCRDEYNEDLLYLGHLAGVKSELTAEENLNFNLRISGYDDFDTAAILAKVNLAGFEEALAGHLSAGQHRRTALARLWHNDCKVWILDEPFTAIDKKGVEELEQLFIQHADNGGCVILTTHQDMGIIKDDRLRKIRLDYRFV</sequence>
<keyword id="KW-0067">ATP-binding</keyword>
<keyword id="KW-0997">Cell inner membrane</keyword>
<keyword id="KW-1003">Cell membrane</keyword>
<keyword id="KW-0201">Cytochrome c-type biogenesis</keyword>
<keyword id="KW-0472">Membrane</keyword>
<keyword id="KW-0547">Nucleotide-binding</keyword>
<keyword id="KW-1278">Translocase</keyword>
<keyword id="KW-0813">Transport</keyword>
<dbReference type="EC" id="7.6.2.5" evidence="1"/>
<dbReference type="EMBL" id="CP000446">
    <property type="protein sequence ID" value="ABI37312.1"/>
    <property type="molecule type" value="Genomic_DNA"/>
</dbReference>
<dbReference type="RefSeq" id="WP_011621039.1">
    <property type="nucleotide sequence ID" value="NC_008321.1"/>
</dbReference>
<dbReference type="SMR" id="Q0HNQ5"/>
<dbReference type="KEGG" id="she:Shewmr4_0231"/>
<dbReference type="HOGENOM" id="CLU_000604_1_2_6"/>
<dbReference type="GO" id="GO:0005886">
    <property type="term" value="C:plasma membrane"/>
    <property type="evidence" value="ECO:0007669"/>
    <property type="project" value="UniProtKB-SubCell"/>
</dbReference>
<dbReference type="GO" id="GO:0015439">
    <property type="term" value="F:ABC-type heme transporter activity"/>
    <property type="evidence" value="ECO:0007669"/>
    <property type="project" value="UniProtKB-EC"/>
</dbReference>
<dbReference type="GO" id="GO:0005524">
    <property type="term" value="F:ATP binding"/>
    <property type="evidence" value="ECO:0007669"/>
    <property type="project" value="UniProtKB-KW"/>
</dbReference>
<dbReference type="GO" id="GO:0016887">
    <property type="term" value="F:ATP hydrolysis activity"/>
    <property type="evidence" value="ECO:0007669"/>
    <property type="project" value="InterPro"/>
</dbReference>
<dbReference type="GO" id="GO:0017004">
    <property type="term" value="P:cytochrome complex assembly"/>
    <property type="evidence" value="ECO:0007669"/>
    <property type="project" value="UniProtKB-KW"/>
</dbReference>
<dbReference type="Gene3D" id="3.40.50.300">
    <property type="entry name" value="P-loop containing nucleotide triphosphate hydrolases"/>
    <property type="match status" value="1"/>
</dbReference>
<dbReference type="InterPro" id="IPR003593">
    <property type="entry name" value="AAA+_ATPase"/>
</dbReference>
<dbReference type="InterPro" id="IPR003439">
    <property type="entry name" value="ABC_transporter-like_ATP-bd"/>
</dbReference>
<dbReference type="InterPro" id="IPR005895">
    <property type="entry name" value="ABC_transptr_haem_export_CcmA"/>
</dbReference>
<dbReference type="InterPro" id="IPR027417">
    <property type="entry name" value="P-loop_NTPase"/>
</dbReference>
<dbReference type="NCBIfam" id="TIGR01189">
    <property type="entry name" value="ccmA"/>
    <property type="match status" value="1"/>
</dbReference>
<dbReference type="NCBIfam" id="NF010061">
    <property type="entry name" value="PRK13538.1"/>
    <property type="match status" value="1"/>
</dbReference>
<dbReference type="PANTHER" id="PTHR43499">
    <property type="entry name" value="ABC TRANSPORTER I FAMILY MEMBER 1"/>
    <property type="match status" value="1"/>
</dbReference>
<dbReference type="PANTHER" id="PTHR43499:SF1">
    <property type="entry name" value="ABC TRANSPORTER I FAMILY MEMBER 1"/>
    <property type="match status" value="1"/>
</dbReference>
<dbReference type="Pfam" id="PF00005">
    <property type="entry name" value="ABC_tran"/>
    <property type="match status" value="1"/>
</dbReference>
<dbReference type="SMART" id="SM00382">
    <property type="entry name" value="AAA"/>
    <property type="match status" value="1"/>
</dbReference>
<dbReference type="SUPFAM" id="SSF52540">
    <property type="entry name" value="P-loop containing nucleoside triphosphate hydrolases"/>
    <property type="match status" value="1"/>
</dbReference>
<dbReference type="PROSITE" id="PS50893">
    <property type="entry name" value="ABC_TRANSPORTER_2"/>
    <property type="match status" value="1"/>
</dbReference>
<dbReference type="PROSITE" id="PS51243">
    <property type="entry name" value="CCMA"/>
    <property type="match status" value="1"/>
</dbReference>